<reference key="1">
    <citation type="submission" date="2008-04" db="EMBL/GenBank/DDBJ databases">
        <title>Complete sequence of Yersinia pseudotuberculosis PB1/+.</title>
        <authorList>
            <person name="Copeland A."/>
            <person name="Lucas S."/>
            <person name="Lapidus A."/>
            <person name="Glavina del Rio T."/>
            <person name="Dalin E."/>
            <person name="Tice H."/>
            <person name="Bruce D."/>
            <person name="Goodwin L."/>
            <person name="Pitluck S."/>
            <person name="Munk A.C."/>
            <person name="Brettin T."/>
            <person name="Detter J.C."/>
            <person name="Han C."/>
            <person name="Tapia R."/>
            <person name="Schmutz J."/>
            <person name="Larimer F."/>
            <person name="Land M."/>
            <person name="Hauser L."/>
            <person name="Challacombe J.F."/>
            <person name="Green L."/>
            <person name="Lindler L.E."/>
            <person name="Nikolich M.P."/>
            <person name="Richardson P."/>
        </authorList>
    </citation>
    <scope>NUCLEOTIDE SEQUENCE [LARGE SCALE GENOMIC DNA]</scope>
    <source>
        <strain>PB1/+</strain>
    </source>
</reference>
<evidence type="ECO:0000255" key="1">
    <source>
        <dbReference type="HAMAP-Rule" id="MF_01190"/>
    </source>
</evidence>
<comment type="function">
    <text evidence="1">Represses the transcription of fabB, involved in unsaturated fatty acid (UFA) biosynthesis. By controlling UFA production, FabR directly influences the physical properties of the membrane bilayer.</text>
</comment>
<comment type="subunit">
    <text evidence="1">Homodimer.</text>
</comment>
<comment type="subcellular location">
    <subcellularLocation>
        <location evidence="1">Cytoplasm</location>
    </subcellularLocation>
</comment>
<organism>
    <name type="scientific">Yersinia pseudotuberculosis serotype IB (strain PB1/+)</name>
    <dbReference type="NCBI Taxonomy" id="502801"/>
    <lineage>
        <taxon>Bacteria</taxon>
        <taxon>Pseudomonadati</taxon>
        <taxon>Pseudomonadota</taxon>
        <taxon>Gammaproteobacteria</taxon>
        <taxon>Enterobacterales</taxon>
        <taxon>Yersiniaceae</taxon>
        <taxon>Yersinia</taxon>
    </lineage>
</organism>
<accession>B2JZF5</accession>
<keyword id="KW-0963">Cytoplasm</keyword>
<keyword id="KW-0238">DNA-binding</keyword>
<keyword id="KW-0275">Fatty acid biosynthesis</keyword>
<keyword id="KW-0276">Fatty acid metabolism</keyword>
<keyword id="KW-0444">Lipid biosynthesis</keyword>
<keyword id="KW-0443">Lipid metabolism</keyword>
<keyword id="KW-0678">Repressor</keyword>
<keyword id="KW-0804">Transcription</keyword>
<keyword id="KW-0805">Transcription regulation</keyword>
<dbReference type="EMBL" id="CP001048">
    <property type="protein sequence ID" value="ACC87128.1"/>
    <property type="molecule type" value="Genomic_DNA"/>
</dbReference>
<dbReference type="RefSeq" id="WP_002209476.1">
    <property type="nucleotide sequence ID" value="NZ_CP009780.1"/>
</dbReference>
<dbReference type="SMR" id="B2JZF5"/>
<dbReference type="GeneID" id="96663601"/>
<dbReference type="KEGG" id="ypb:YPTS_0129"/>
<dbReference type="PATRIC" id="fig|502801.10.peg.3806"/>
<dbReference type="GO" id="GO:0005737">
    <property type="term" value="C:cytoplasm"/>
    <property type="evidence" value="ECO:0007669"/>
    <property type="project" value="UniProtKB-SubCell"/>
</dbReference>
<dbReference type="GO" id="GO:0003677">
    <property type="term" value="F:DNA binding"/>
    <property type="evidence" value="ECO:0007669"/>
    <property type="project" value="UniProtKB-KW"/>
</dbReference>
<dbReference type="GO" id="GO:0003700">
    <property type="term" value="F:DNA-binding transcription factor activity"/>
    <property type="evidence" value="ECO:0007669"/>
    <property type="project" value="UniProtKB-UniRule"/>
</dbReference>
<dbReference type="GO" id="GO:0006633">
    <property type="term" value="P:fatty acid biosynthetic process"/>
    <property type="evidence" value="ECO:0007669"/>
    <property type="project" value="UniProtKB-UniRule"/>
</dbReference>
<dbReference type="GO" id="GO:0045717">
    <property type="term" value="P:negative regulation of fatty acid biosynthetic process"/>
    <property type="evidence" value="ECO:0007669"/>
    <property type="project" value="UniProtKB-UniRule"/>
</dbReference>
<dbReference type="FunFam" id="1.10.10.60:FF:000034">
    <property type="entry name" value="HTH-type transcriptional repressor FabR"/>
    <property type="match status" value="1"/>
</dbReference>
<dbReference type="FunFam" id="1.10.357.10:FF:000001">
    <property type="entry name" value="HTH-type transcriptional repressor FabR"/>
    <property type="match status" value="1"/>
</dbReference>
<dbReference type="Gene3D" id="1.10.10.60">
    <property type="entry name" value="Homeodomain-like"/>
    <property type="match status" value="1"/>
</dbReference>
<dbReference type="Gene3D" id="1.10.357.10">
    <property type="entry name" value="Tetracycline Repressor, domain 2"/>
    <property type="match status" value="1"/>
</dbReference>
<dbReference type="HAMAP" id="MF_01190">
    <property type="entry name" value="HTH_type_FabR"/>
    <property type="match status" value="1"/>
</dbReference>
<dbReference type="InterPro" id="IPR054129">
    <property type="entry name" value="DesT_TetR_C"/>
</dbReference>
<dbReference type="InterPro" id="IPR009057">
    <property type="entry name" value="Homeodomain-like_sf"/>
</dbReference>
<dbReference type="InterPro" id="IPR001647">
    <property type="entry name" value="HTH_TetR"/>
</dbReference>
<dbReference type="InterPro" id="IPR050692">
    <property type="entry name" value="HTH_transcr_repressor_FabR"/>
</dbReference>
<dbReference type="InterPro" id="IPR023764">
    <property type="entry name" value="Tscrpt_reg_HTH_FabR"/>
</dbReference>
<dbReference type="NCBIfam" id="NF008402">
    <property type="entry name" value="PRK11202.1"/>
    <property type="match status" value="1"/>
</dbReference>
<dbReference type="PANTHER" id="PTHR47752">
    <property type="entry name" value="HTH-TYPE TRANSCRIPTIONAL REPRESSOR FABR"/>
    <property type="match status" value="1"/>
</dbReference>
<dbReference type="PANTHER" id="PTHR47752:SF1">
    <property type="entry name" value="HTH-TYPE TRANSCRIPTIONAL REPRESSOR FABR"/>
    <property type="match status" value="1"/>
</dbReference>
<dbReference type="Pfam" id="PF21943">
    <property type="entry name" value="TetR_C_46"/>
    <property type="match status" value="1"/>
</dbReference>
<dbReference type="Pfam" id="PF00440">
    <property type="entry name" value="TetR_N"/>
    <property type="match status" value="1"/>
</dbReference>
<dbReference type="SUPFAM" id="SSF46689">
    <property type="entry name" value="Homeodomain-like"/>
    <property type="match status" value="1"/>
</dbReference>
<dbReference type="PROSITE" id="PS50977">
    <property type="entry name" value="HTH_TETR_2"/>
    <property type="match status" value="1"/>
</dbReference>
<gene>
    <name evidence="1" type="primary">fabR</name>
    <name type="ordered locus">YPTS_0129</name>
</gene>
<name>FABR_YERPB</name>
<protein>
    <recommendedName>
        <fullName evidence="1">HTH-type transcriptional repressor FabR</fullName>
    </recommendedName>
</protein>
<feature type="chain" id="PRO_1000138362" description="HTH-type transcriptional repressor FabR">
    <location>
        <begin position="1"/>
        <end position="211"/>
    </location>
</feature>
<feature type="domain" description="HTH tetR-type" evidence="1">
    <location>
        <begin position="10"/>
        <end position="70"/>
    </location>
</feature>
<feature type="DNA-binding region" description="H-T-H motif" evidence="1">
    <location>
        <begin position="33"/>
        <end position="52"/>
    </location>
</feature>
<sequence length="211" mass="24167">MGVRAQQKERTRRSLIEAAFSQLSAERSFASLSLREVSREAGIAPTSFYRHFRDVDELGLTMVDESGLMLRQLMRQARQRIAKGGSVIRTSVSTFMEFIGNNPNAFRLLLRERSGTSAAFRAAVAREIQHFIAELADYLELENHMPRSFTEAQAEAMVTIVFSAGAEVLDVDIEQRRQLEERLVLQLRMISKGAYYWYRREQEKLAASRVE</sequence>
<proteinExistence type="inferred from homology"/>